<reference key="1">
    <citation type="journal article" date="2008" name="Antimicrob. Agents Chemother.">
        <title>Mutated response regulator graR is responsible for phenotypic conversion of Staphylococcus aureus from heterogeneous vancomycin-intermediate resistance to vancomycin-intermediate resistance.</title>
        <authorList>
            <person name="Neoh H.-M."/>
            <person name="Cui L."/>
            <person name="Yuzawa H."/>
            <person name="Takeuchi F."/>
            <person name="Matsuo M."/>
            <person name="Hiramatsu K."/>
        </authorList>
    </citation>
    <scope>NUCLEOTIDE SEQUENCE [LARGE SCALE GENOMIC DNA]</scope>
    <source>
        <strain>Mu3 / ATCC 700698</strain>
    </source>
</reference>
<keyword id="KW-0067">ATP-binding</keyword>
<keyword id="KW-0963">Cytoplasm</keyword>
<keyword id="KW-0436">Ligase</keyword>
<keyword id="KW-0547">Nucleotide-binding</keyword>
<keyword id="KW-0694">RNA-binding</keyword>
<keyword id="KW-0819">tRNA processing</keyword>
<keyword id="KW-0820">tRNA-binding</keyword>
<gene>
    <name evidence="1" type="primary">tmcAL</name>
    <name type="ordered locus">SAHV_1117</name>
</gene>
<accession>A7X141</accession>
<dbReference type="EC" id="6.3.4.-" evidence="1"/>
<dbReference type="EMBL" id="AP009324">
    <property type="protein sequence ID" value="BAF78000.1"/>
    <property type="molecule type" value="Genomic_DNA"/>
</dbReference>
<dbReference type="RefSeq" id="WP_000843611.1">
    <property type="nucleotide sequence ID" value="NC_009782.1"/>
</dbReference>
<dbReference type="SMR" id="A7X141"/>
<dbReference type="KEGG" id="saw:SAHV_1117"/>
<dbReference type="HOGENOM" id="CLU_038915_0_2_9"/>
<dbReference type="GO" id="GO:0005737">
    <property type="term" value="C:cytoplasm"/>
    <property type="evidence" value="ECO:0007669"/>
    <property type="project" value="UniProtKB-SubCell"/>
</dbReference>
<dbReference type="GO" id="GO:0005524">
    <property type="term" value="F:ATP binding"/>
    <property type="evidence" value="ECO:0007669"/>
    <property type="project" value="UniProtKB-KW"/>
</dbReference>
<dbReference type="GO" id="GO:0016879">
    <property type="term" value="F:ligase activity, forming carbon-nitrogen bonds"/>
    <property type="evidence" value="ECO:0007669"/>
    <property type="project" value="UniProtKB-UniRule"/>
</dbReference>
<dbReference type="GO" id="GO:0000049">
    <property type="term" value="F:tRNA binding"/>
    <property type="evidence" value="ECO:0007669"/>
    <property type="project" value="UniProtKB-KW"/>
</dbReference>
<dbReference type="GO" id="GO:0006400">
    <property type="term" value="P:tRNA modification"/>
    <property type="evidence" value="ECO:0007669"/>
    <property type="project" value="UniProtKB-UniRule"/>
</dbReference>
<dbReference type="Gene3D" id="3.40.50.620">
    <property type="entry name" value="HUPs"/>
    <property type="match status" value="1"/>
</dbReference>
<dbReference type="HAMAP" id="MF_01539">
    <property type="entry name" value="TmcAL"/>
    <property type="match status" value="1"/>
</dbReference>
<dbReference type="InterPro" id="IPR014729">
    <property type="entry name" value="Rossmann-like_a/b/a_fold"/>
</dbReference>
<dbReference type="InterPro" id="IPR008513">
    <property type="entry name" value="tRNA(Met)_cyd_acetate_ligase"/>
</dbReference>
<dbReference type="NCBIfam" id="NF010191">
    <property type="entry name" value="PRK13670.1"/>
    <property type="match status" value="1"/>
</dbReference>
<dbReference type="PANTHER" id="PTHR37825">
    <property type="entry name" value="TRNA(MET) CYTIDINE ACETATE LIGASE"/>
    <property type="match status" value="1"/>
</dbReference>
<dbReference type="PANTHER" id="PTHR37825:SF1">
    <property type="entry name" value="TRNA(MET) CYTIDINE ACETATE LIGASE"/>
    <property type="match status" value="1"/>
</dbReference>
<dbReference type="Pfam" id="PF05636">
    <property type="entry name" value="HIGH_NTase1"/>
    <property type="match status" value="1"/>
</dbReference>
<dbReference type="SUPFAM" id="SSF52374">
    <property type="entry name" value="Nucleotidylyl transferase"/>
    <property type="match status" value="1"/>
</dbReference>
<protein>
    <recommendedName>
        <fullName evidence="1">tRNA(Met) cytidine acetate ligase</fullName>
        <ecNumber evidence="1">6.3.4.-</ecNumber>
    </recommendedName>
</protein>
<name>TMCAL_STAA1</name>
<sequence length="379" mass="43240">MKSVGLITEYNPFHNGHQYHINQSKKLTNADVTIAIMSGNFVMRGEPAIYNKFTRAKMALSTADLVIELPATASLSSGDHFAELAVKVADYMSVDTIAFGSENNDIKTLKQLAHSINEIEQSESFSQKVKEGKSYPRIISELLEHHEALASPNNILGISYLKAIAKNAKNINAISIKRENAQHHDSLIQHHQFASGTSIRTSIISQDDHWHHVVPKDIQHLYVTPHITLNQIFPYLKYQIIAMTTDSLKNIYTVTEGFENRLKSNIYEATDFHHFVKLLKTKRYTYTHIQRLLMNVLLNIKPTDVTSNIHAVKVLAMNDRGRQYLKHLKTAFPERQYITNINKSNAHYFTNEIKATHIYNAISGQQQTDFNTPVIQQYR</sequence>
<comment type="function">
    <text evidence="1">Catalyzes the formation of N(4)-acetylcytidine (ac(4)C) at the wobble position of elongator tRNA(Met), using acetate and ATP as substrates. First activates an acetate ion to form acetyladenylate (Ac-AMP) and then transfers the acetyl group to tRNA to form ac(4)C34.</text>
</comment>
<comment type="catalytic activity">
    <reaction evidence="1">
        <text>cytidine(34) in elongator tRNA(Met) + acetate + ATP = N(4)-acetylcytidine(34) in elongator tRNA(Met) + AMP + diphosphate</text>
        <dbReference type="Rhea" id="RHEA:58144"/>
        <dbReference type="Rhea" id="RHEA-COMP:10693"/>
        <dbReference type="Rhea" id="RHEA-COMP:10694"/>
        <dbReference type="ChEBI" id="CHEBI:30089"/>
        <dbReference type="ChEBI" id="CHEBI:30616"/>
        <dbReference type="ChEBI" id="CHEBI:33019"/>
        <dbReference type="ChEBI" id="CHEBI:74900"/>
        <dbReference type="ChEBI" id="CHEBI:82748"/>
        <dbReference type="ChEBI" id="CHEBI:456215"/>
    </reaction>
</comment>
<comment type="subcellular location">
    <subcellularLocation>
        <location evidence="1">Cytoplasm</location>
    </subcellularLocation>
</comment>
<comment type="similarity">
    <text evidence="1">Belongs to the TmcAL family.</text>
</comment>
<organism>
    <name type="scientific">Staphylococcus aureus (strain Mu3 / ATCC 700698)</name>
    <dbReference type="NCBI Taxonomy" id="418127"/>
    <lineage>
        <taxon>Bacteria</taxon>
        <taxon>Bacillati</taxon>
        <taxon>Bacillota</taxon>
        <taxon>Bacilli</taxon>
        <taxon>Bacillales</taxon>
        <taxon>Staphylococcaceae</taxon>
        <taxon>Staphylococcus</taxon>
    </lineage>
</organism>
<evidence type="ECO:0000255" key="1">
    <source>
        <dbReference type="HAMAP-Rule" id="MF_01539"/>
    </source>
</evidence>
<feature type="chain" id="PRO_1000068753" description="tRNA(Met) cytidine acetate ligase">
    <location>
        <begin position="1"/>
        <end position="379"/>
    </location>
</feature>
<feature type="binding site" evidence="1">
    <location>
        <begin position="7"/>
        <end position="20"/>
    </location>
    <ligand>
        <name>ATP</name>
        <dbReference type="ChEBI" id="CHEBI:30616"/>
    </ligand>
</feature>
<feature type="binding site" evidence="1">
    <location>
        <position position="100"/>
    </location>
    <ligand>
        <name>ATP</name>
        <dbReference type="ChEBI" id="CHEBI:30616"/>
    </ligand>
</feature>
<feature type="binding site" evidence="1">
    <location>
        <position position="153"/>
    </location>
    <ligand>
        <name>ATP</name>
        <dbReference type="ChEBI" id="CHEBI:30616"/>
    </ligand>
</feature>
<feature type="binding site" evidence="1">
    <location>
        <position position="178"/>
    </location>
    <ligand>
        <name>ATP</name>
        <dbReference type="ChEBI" id="CHEBI:30616"/>
    </ligand>
</feature>
<proteinExistence type="inferred from homology"/>